<proteinExistence type="uncertain"/>
<comment type="catalytic activity">
    <reaction evidence="1">
        <text>N-acetyl-D-galactosamine 6-phosphate + H2O = D-galactosamine 6-phosphate + acetate</text>
        <dbReference type="Rhea" id="RHEA:18149"/>
        <dbReference type="ChEBI" id="CHEBI:15377"/>
        <dbReference type="ChEBI" id="CHEBI:30089"/>
        <dbReference type="ChEBI" id="CHEBI:71673"/>
        <dbReference type="ChEBI" id="CHEBI:71674"/>
    </reaction>
</comment>
<comment type="miscellaneous">
    <text>In contrast to E.coli strains C and EC3132, K-12 strains cannot grow on N-acetylgalactosamine and D-galactosamine, because they carry a deletion and thus lack active PTS systems specific for these compounds. Therefore, AgaA in K-12 strains is not involved in the degradation of these compounds.</text>
</comment>
<comment type="similarity">
    <text evidence="2">Belongs to the metallo-dependent hydrolases superfamily. NagA family.</text>
</comment>
<comment type="caution">
    <text evidence="2">Could be the product of a pseudogene.</text>
</comment>
<comment type="sequence caution" evidence="2">
    <conflict type="frameshift">
        <sequence resource="EMBL-CDS" id="AAA57938"/>
    </conflict>
</comment>
<organism>
    <name type="scientific">Escherichia coli (strain K12)</name>
    <dbReference type="NCBI Taxonomy" id="83333"/>
    <lineage>
        <taxon>Bacteria</taxon>
        <taxon>Pseudomonadati</taxon>
        <taxon>Pseudomonadota</taxon>
        <taxon>Gammaproteobacteria</taxon>
        <taxon>Enterobacterales</taxon>
        <taxon>Enterobacteriaceae</taxon>
        <taxon>Escherichia</taxon>
    </lineage>
</organism>
<keyword id="KW-0119">Carbohydrate metabolism</keyword>
<keyword id="KW-0378">Hydrolase</keyword>
<keyword id="KW-1185">Reference proteome</keyword>
<protein>
    <recommendedName>
        <fullName evidence="2">Putative N-acetylgalactosamine-6-phosphate deacetylase</fullName>
        <shortName evidence="2">Aga-6-P deacetylase</shortName>
        <ecNumber evidence="1">3.5.1.-</ecNumber>
    </recommendedName>
</protein>
<reference key="1">
    <citation type="journal article" date="1997" name="Science">
        <title>The complete genome sequence of Escherichia coli K-12.</title>
        <authorList>
            <person name="Blattner F.R."/>
            <person name="Plunkett G. III"/>
            <person name="Bloch C.A."/>
            <person name="Perna N.T."/>
            <person name="Burland V."/>
            <person name="Riley M."/>
            <person name="Collado-Vides J."/>
            <person name="Glasner J.D."/>
            <person name="Rode C.K."/>
            <person name="Mayhew G.F."/>
            <person name="Gregor J."/>
            <person name="Davis N.W."/>
            <person name="Kirkpatrick H.A."/>
            <person name="Goeden M.A."/>
            <person name="Rose D.J."/>
            <person name="Mau B."/>
            <person name="Shao Y."/>
        </authorList>
    </citation>
    <scope>NUCLEOTIDE SEQUENCE [LARGE SCALE GENOMIC DNA]</scope>
    <source>
        <strain>K12 / MG1655 / ATCC 47076</strain>
    </source>
</reference>
<reference key="2">
    <citation type="journal article" date="2006" name="Nucleic Acids Res.">
        <title>Escherichia coli K-12: a cooperatively developed annotation snapshot -- 2005.</title>
        <authorList>
            <person name="Riley M."/>
            <person name="Abe T."/>
            <person name="Arnaud M.B."/>
            <person name="Berlyn M.K.B."/>
            <person name="Blattner F.R."/>
            <person name="Chaudhuri R.R."/>
            <person name="Glasner J.D."/>
            <person name="Horiuchi T."/>
            <person name="Keseler I.M."/>
            <person name="Kosuge T."/>
            <person name="Mori H."/>
            <person name="Perna N.T."/>
            <person name="Plunkett G. III"/>
            <person name="Rudd K.E."/>
            <person name="Serres M.H."/>
            <person name="Thomas G.H."/>
            <person name="Thomson N.R."/>
            <person name="Wishart D."/>
            <person name="Wanner B.L."/>
        </authorList>
    </citation>
    <scope>SEQUENCE REVISION TO 145</scope>
</reference>
<reference key="3">
    <citation type="journal article" date="2006" name="Mol. Syst. Biol.">
        <title>Highly accurate genome sequences of Escherichia coli K-12 strains MG1655 and W3110.</title>
        <authorList>
            <person name="Hayashi K."/>
            <person name="Morooka N."/>
            <person name="Yamamoto Y."/>
            <person name="Fujita K."/>
            <person name="Isono K."/>
            <person name="Choi S."/>
            <person name="Ohtsubo E."/>
            <person name="Baba T."/>
            <person name="Wanner B.L."/>
            <person name="Mori H."/>
            <person name="Horiuchi T."/>
        </authorList>
    </citation>
    <scope>NUCLEOTIDE SEQUENCE [LARGE SCALE GENOMIC DNA]</scope>
    <source>
        <strain>K12 / W3110 / ATCC 27325 / DSM 5911</strain>
    </source>
</reference>
<reference key="4">
    <citation type="journal article" date="1996" name="Microbiology">
        <title>Novel phosphotransferase genes revealed by bacterial genome sequencing: a gene cluster encoding a putative N-acetylgalactosamine metabolic pathway in Escherichia coli.</title>
        <authorList>
            <person name="Reizer J."/>
            <person name="Ramseier T.M."/>
            <person name="Reizer A."/>
            <person name="Charbit A."/>
            <person name="Saier M.H. Jr."/>
        </authorList>
    </citation>
    <scope>DISCUSSION OF SEQUENCE</scope>
</reference>
<gene>
    <name type="primary">agaA</name>
    <name type="ordered locus">b3135</name>
    <name type="ordered locus">JW5527</name>
</gene>
<feature type="chain" id="PRO_0000170920" description="Putative N-acetylgalactosamine-6-phosphate deacetylase">
    <location>
        <begin position="1"/>
        <end position="167"/>
    </location>
</feature>
<feature type="sequence conflict" description="In Ref. 1; AAA57938." evidence="2" ref="1">
    <original>S</original>
    <variation>R</variation>
    <location>
        <position position="145"/>
    </location>
</feature>
<evidence type="ECO:0000250" key="1">
    <source>
        <dbReference type="UniProtKB" id="Q8XAC3"/>
    </source>
</evidence>
<evidence type="ECO:0000305" key="2"/>
<dbReference type="EC" id="3.5.1.-" evidence="1"/>
<dbReference type="EMBL" id="U18997">
    <property type="protein sequence ID" value="AAA57938.1"/>
    <property type="status" value="ALT_FRAME"/>
    <property type="molecule type" value="Genomic_DNA"/>
</dbReference>
<dbReference type="EMBL" id="U00096">
    <property type="status" value="NOT_ANNOTATED_CDS"/>
    <property type="molecule type" value="Genomic_DNA"/>
</dbReference>
<dbReference type="EMBL" id="AP009048">
    <property type="protein sequence ID" value="BAE77181.1"/>
    <property type="molecule type" value="Genomic_DNA"/>
</dbReference>
<dbReference type="PIR" id="C65103">
    <property type="entry name" value="C65103"/>
</dbReference>
<dbReference type="SMR" id="P42906"/>
<dbReference type="BioGRID" id="4261157">
    <property type="interactions" value="5"/>
</dbReference>
<dbReference type="FunCoup" id="P42906">
    <property type="interactions" value="12"/>
</dbReference>
<dbReference type="KEGG" id="ecj:JW5527"/>
<dbReference type="PATRIC" id="fig|83333.103.peg.4041"/>
<dbReference type="EchoBASE" id="EB2619"/>
<dbReference type="eggNOG" id="COG1820">
    <property type="taxonomic scope" value="Bacteria"/>
</dbReference>
<dbReference type="HOGENOM" id="CLU_032482_3_1_6"/>
<dbReference type="InParanoid" id="P42906"/>
<dbReference type="PhylomeDB" id="P42906"/>
<dbReference type="Proteomes" id="UP000000625">
    <property type="component" value="Chromosome"/>
</dbReference>
<dbReference type="GO" id="GO:0047419">
    <property type="term" value="F:N-acetylgalactosamine-6-phosphate deacetylase activity"/>
    <property type="evidence" value="ECO:0007669"/>
    <property type="project" value="RHEA"/>
</dbReference>
<dbReference type="Gene3D" id="3.20.20.140">
    <property type="entry name" value="Metal-dependent hydrolases"/>
    <property type="match status" value="1"/>
</dbReference>
<dbReference type="InterPro" id="IPR006680">
    <property type="entry name" value="Amidohydro-rel"/>
</dbReference>
<dbReference type="InterPro" id="IPR032466">
    <property type="entry name" value="Metal_Hydrolase"/>
</dbReference>
<dbReference type="PANTHER" id="PTHR11113">
    <property type="entry name" value="N-ACETYLGLUCOSAMINE-6-PHOSPHATE DEACETYLASE"/>
    <property type="match status" value="1"/>
</dbReference>
<dbReference type="PANTHER" id="PTHR11113:SF14">
    <property type="entry name" value="N-ACETYLGLUCOSAMINE-6-PHOSPHATE DEACETYLASE"/>
    <property type="match status" value="1"/>
</dbReference>
<dbReference type="Pfam" id="PF01979">
    <property type="entry name" value="Amidohydro_1"/>
    <property type="match status" value="1"/>
</dbReference>
<dbReference type="SUPFAM" id="SSF51556">
    <property type="entry name" value="Metallo-dependent hydrolases"/>
    <property type="match status" value="1"/>
</dbReference>
<name>AGAA_ECOLI</name>
<accession>P42906</accession>
<accession>P76670</accession>
<accession>Q2M975</accession>
<accession>Q6BF43</accession>
<sequence length="167" mass="17519">MHCYNGMTGLHHREPGMVGAGLTDKRAWLELIADGHHVHPAAMSLCCCCAKERIVLITDAMQAAGMPDGRYTLCGEEVQMHGGVVRTASGGLAGSTLSVDAAVRNMVELTGVTPAEAIHMASLHPARMLGVDGVLGSLKPGKRASVVALDSGLHVQQIWIQGQLASF</sequence>